<name>ASA1_ASPNC</name>
<sequence length="440" mass="48497">MSAQSPQVRQPPATPTYILRGHAAAIHALQIFHQNLRLVSGDADGWIVVWDLVSKRPRATWKAHDGTVLEVKGFSFGNGAVTEVFTHGRDHKLRVWRFSLQDEESLQKVLPVDIEKTSSTAASQPWLVHSLPVNALNFCAFSMVFLPPDKANTASDASEAPKENTSLSSVLIAVPNALNSGAIDLFHLPQERRICTIPADTEVQTGMVMAANLVISPSGELYVASAYEDGRVMVHGCRGSLQEKDLTQSTKTPWKWEKLYVCRAHSQPVLSLHVSPAGNYFFSSSADAVLAKHPIPSLGSPGHAPEELPIRSINTKHAGQQGVRIRSDGKIFATAGWDSRVRVYSCKTMKELAVLKWHKDGCYAVAFADVDVFEVREKSDEEKPTVSPNDNGNQENQLAGRAETEFSLATVHRQRYEKVQNTHWLAAGSKDGKISLWDIY</sequence>
<comment type="function">
    <text evidence="1">Component of the ASTRA complex involved in chromatin remodeling.</text>
</comment>
<comment type="subunit">
    <text evidence="1">Component of the ASTRA chromatin remodeling machinery complex.</text>
</comment>
<comment type="subcellular location">
    <subcellularLocation>
        <location evidence="1">Nucleus</location>
    </subcellularLocation>
</comment>
<comment type="similarity">
    <text evidence="2">Belongs to the WD repeat ASA1 family.</text>
</comment>
<keyword id="KW-0156">Chromatin regulator</keyword>
<keyword id="KW-0539">Nucleus</keyword>
<keyword id="KW-1185">Reference proteome</keyword>
<keyword id="KW-0677">Repeat</keyword>
<keyword id="KW-0853">WD repeat</keyword>
<reference key="1">
    <citation type="journal article" date="2007" name="Nat. Biotechnol.">
        <title>Genome sequencing and analysis of the versatile cell factory Aspergillus niger CBS 513.88.</title>
        <authorList>
            <person name="Pel H.J."/>
            <person name="de Winde J.H."/>
            <person name="Archer D.B."/>
            <person name="Dyer P.S."/>
            <person name="Hofmann G."/>
            <person name="Schaap P.J."/>
            <person name="Turner G."/>
            <person name="de Vries R.P."/>
            <person name="Albang R."/>
            <person name="Albermann K."/>
            <person name="Andersen M.R."/>
            <person name="Bendtsen J.D."/>
            <person name="Benen J.A.E."/>
            <person name="van den Berg M."/>
            <person name="Breestraat S."/>
            <person name="Caddick M.X."/>
            <person name="Contreras R."/>
            <person name="Cornell M."/>
            <person name="Coutinho P.M."/>
            <person name="Danchin E.G.J."/>
            <person name="Debets A.J.M."/>
            <person name="Dekker P."/>
            <person name="van Dijck P.W.M."/>
            <person name="van Dijk A."/>
            <person name="Dijkhuizen L."/>
            <person name="Driessen A.J.M."/>
            <person name="d'Enfert C."/>
            <person name="Geysens S."/>
            <person name="Goosen C."/>
            <person name="Groot G.S.P."/>
            <person name="de Groot P.W.J."/>
            <person name="Guillemette T."/>
            <person name="Henrissat B."/>
            <person name="Herweijer M."/>
            <person name="van den Hombergh J.P.T.W."/>
            <person name="van den Hondel C.A.M.J.J."/>
            <person name="van der Heijden R.T.J.M."/>
            <person name="van der Kaaij R.M."/>
            <person name="Klis F.M."/>
            <person name="Kools H.J."/>
            <person name="Kubicek C.P."/>
            <person name="van Kuyk P.A."/>
            <person name="Lauber J."/>
            <person name="Lu X."/>
            <person name="van der Maarel M.J.E.C."/>
            <person name="Meulenberg R."/>
            <person name="Menke H."/>
            <person name="Mortimer M.A."/>
            <person name="Nielsen J."/>
            <person name="Oliver S.G."/>
            <person name="Olsthoorn M."/>
            <person name="Pal K."/>
            <person name="van Peij N.N.M.E."/>
            <person name="Ram A.F.J."/>
            <person name="Rinas U."/>
            <person name="Roubos J.A."/>
            <person name="Sagt C.M.J."/>
            <person name="Schmoll M."/>
            <person name="Sun J."/>
            <person name="Ussery D."/>
            <person name="Varga J."/>
            <person name="Vervecken W."/>
            <person name="van de Vondervoort P.J.J."/>
            <person name="Wedler H."/>
            <person name="Woesten H.A.B."/>
            <person name="Zeng A.-P."/>
            <person name="van Ooyen A.J.J."/>
            <person name="Visser J."/>
            <person name="Stam H."/>
        </authorList>
    </citation>
    <scope>NUCLEOTIDE SEQUENCE [LARGE SCALE GENOMIC DNA]</scope>
    <source>
        <strain>ATCC MYA-4892 / CBS 513.88 / FGSC A1513</strain>
    </source>
</reference>
<dbReference type="EMBL" id="AM270398">
    <property type="protein sequence ID" value="CAK47271.1"/>
    <property type="molecule type" value="Genomic_DNA"/>
</dbReference>
<dbReference type="EnsemblFungi" id="CAK47271">
    <property type="protein sequence ID" value="CAK47271"/>
    <property type="gene ID" value="An18g01990"/>
</dbReference>
<dbReference type="VEuPathDB" id="FungiDB:An18g01990"/>
<dbReference type="HOGENOM" id="CLU_041940_0_1_1"/>
<dbReference type="Proteomes" id="UP000006706">
    <property type="component" value="Chromosome 8L"/>
</dbReference>
<dbReference type="GO" id="GO:0005634">
    <property type="term" value="C:nucleus"/>
    <property type="evidence" value="ECO:0007669"/>
    <property type="project" value="UniProtKB-SubCell"/>
</dbReference>
<dbReference type="GO" id="GO:0006325">
    <property type="term" value="P:chromatin organization"/>
    <property type="evidence" value="ECO:0007669"/>
    <property type="project" value="UniProtKB-KW"/>
</dbReference>
<dbReference type="Gene3D" id="2.130.10.10">
    <property type="entry name" value="YVTN repeat-like/Quinoprotein amine dehydrogenase"/>
    <property type="match status" value="3"/>
</dbReference>
<dbReference type="InterPro" id="IPR015943">
    <property type="entry name" value="WD40/YVTN_repeat-like_dom_sf"/>
</dbReference>
<dbReference type="InterPro" id="IPR019775">
    <property type="entry name" value="WD40_repeat_CS"/>
</dbReference>
<dbReference type="InterPro" id="IPR036322">
    <property type="entry name" value="WD40_repeat_dom_sf"/>
</dbReference>
<dbReference type="InterPro" id="IPR001680">
    <property type="entry name" value="WD40_rpt"/>
</dbReference>
<dbReference type="PANTHER" id="PTHR19854:SF1">
    <property type="entry name" value="GUANINE NUCLEOTIDE-BINDING PROTEIN SUBUNIT BETA-LIKE PROTEIN 1"/>
    <property type="match status" value="1"/>
</dbReference>
<dbReference type="PANTHER" id="PTHR19854">
    <property type="entry name" value="TRANSDUCIN BETA-LIKE 3"/>
    <property type="match status" value="1"/>
</dbReference>
<dbReference type="Pfam" id="PF00400">
    <property type="entry name" value="WD40"/>
    <property type="match status" value="4"/>
</dbReference>
<dbReference type="SMART" id="SM00320">
    <property type="entry name" value="WD40"/>
    <property type="match status" value="6"/>
</dbReference>
<dbReference type="SUPFAM" id="SSF50978">
    <property type="entry name" value="WD40 repeat-like"/>
    <property type="match status" value="1"/>
</dbReference>
<dbReference type="PROSITE" id="PS00678">
    <property type="entry name" value="WD_REPEATS_1"/>
    <property type="match status" value="2"/>
</dbReference>
<dbReference type="PROSITE" id="PS50082">
    <property type="entry name" value="WD_REPEATS_2"/>
    <property type="match status" value="2"/>
</dbReference>
<dbReference type="PROSITE" id="PS50294">
    <property type="entry name" value="WD_REPEATS_REGION"/>
    <property type="match status" value="1"/>
</dbReference>
<gene>
    <name type="primary">asa1</name>
    <name type="ORF">An18g01990</name>
</gene>
<organism>
    <name type="scientific">Aspergillus niger (strain ATCC MYA-4892 / CBS 513.88 / FGSC A1513)</name>
    <dbReference type="NCBI Taxonomy" id="425011"/>
    <lineage>
        <taxon>Eukaryota</taxon>
        <taxon>Fungi</taxon>
        <taxon>Dikarya</taxon>
        <taxon>Ascomycota</taxon>
        <taxon>Pezizomycotina</taxon>
        <taxon>Eurotiomycetes</taxon>
        <taxon>Eurotiomycetidae</taxon>
        <taxon>Eurotiales</taxon>
        <taxon>Aspergillaceae</taxon>
        <taxon>Aspergillus</taxon>
        <taxon>Aspergillus subgen. Circumdati</taxon>
    </lineage>
</organism>
<evidence type="ECO:0000250" key="1"/>
<evidence type="ECO:0000305" key="2"/>
<accession>A2RA56</accession>
<proteinExistence type="inferred from homology"/>
<feature type="chain" id="PRO_0000402203" description="ASTRA-associated protein 1">
    <location>
        <begin position="1"/>
        <end position="440"/>
    </location>
</feature>
<feature type="repeat" description="WD 1">
    <location>
        <begin position="21"/>
        <end position="60"/>
    </location>
</feature>
<feature type="repeat" description="WD 2">
    <location>
        <begin position="66"/>
        <end position="107"/>
    </location>
</feature>
<feature type="repeat" description="WD 3">
    <location>
        <begin position="205"/>
        <end position="245"/>
    </location>
</feature>
<feature type="repeat" description="WD 4">
    <location>
        <begin position="264"/>
        <end position="303"/>
    </location>
</feature>
<feature type="repeat" description="WD 5">
    <location>
        <begin position="315"/>
        <end position="354"/>
    </location>
</feature>
<feature type="repeat" description="WD 6">
    <location>
        <begin position="406"/>
        <end position="440"/>
    </location>
</feature>
<protein>
    <recommendedName>
        <fullName>ASTRA-associated protein 1</fullName>
    </recommendedName>
</protein>